<reference key="1">
    <citation type="submission" date="2006-05" db="EMBL/GenBank/DDBJ databases">
        <title>Complete sequence of chromosome 1 of Burkholderia cenocepacia AU 1054.</title>
        <authorList>
            <consortium name="US DOE Joint Genome Institute"/>
            <person name="Copeland A."/>
            <person name="Lucas S."/>
            <person name="Lapidus A."/>
            <person name="Barry K."/>
            <person name="Detter J.C."/>
            <person name="Glavina del Rio T."/>
            <person name="Hammon N."/>
            <person name="Israni S."/>
            <person name="Dalin E."/>
            <person name="Tice H."/>
            <person name="Pitluck S."/>
            <person name="Chain P."/>
            <person name="Malfatti S."/>
            <person name="Shin M."/>
            <person name="Vergez L."/>
            <person name="Schmutz J."/>
            <person name="Larimer F."/>
            <person name="Land M."/>
            <person name="Hauser L."/>
            <person name="Kyrpides N."/>
            <person name="Lykidis A."/>
            <person name="LiPuma J.J."/>
            <person name="Konstantinidis K."/>
            <person name="Tiedje J.M."/>
            <person name="Richardson P."/>
        </authorList>
    </citation>
    <scope>NUCLEOTIDE SEQUENCE [LARGE SCALE GENOMIC DNA]</scope>
    <source>
        <strain>AU 1054</strain>
    </source>
</reference>
<sequence>MNATTSAAAYGPLAGADLEAELAQARVADSDARDAAILEHDGSASVVPLARRRTSGTAPDDAVTLSGVSKRFGARTVLDNVELGIARGSFVAIVGRSGCGKSTLLRLVAGLEQPSSGALVTRGEGGGALDTRIMYQDARLLPWKTVLQNVMLGLGRGARDQARAVLDEVGLLERANDWPAQLSGGQRQRVALARALVHRPQLLLLDEPLGALDALTRIEMHALIERLWREHRFTALLVTHDVQEAVALGDRILLIEQGRVALDQAVPLDRPRARASAAFAALEDRVLKRVLAGGPGAADHDAEHEADKVRPVGQIRWAV</sequence>
<organism>
    <name type="scientific">Burkholderia orbicola (strain AU 1054)</name>
    <dbReference type="NCBI Taxonomy" id="331271"/>
    <lineage>
        <taxon>Bacteria</taxon>
        <taxon>Pseudomonadati</taxon>
        <taxon>Pseudomonadota</taxon>
        <taxon>Betaproteobacteria</taxon>
        <taxon>Burkholderiales</taxon>
        <taxon>Burkholderiaceae</taxon>
        <taxon>Burkholderia</taxon>
        <taxon>Burkholderia cepacia complex</taxon>
        <taxon>Burkholderia orbicola</taxon>
    </lineage>
</organism>
<name>SSUB1_BURO1</name>
<keyword id="KW-0067">ATP-binding</keyword>
<keyword id="KW-0997">Cell inner membrane</keyword>
<keyword id="KW-1003">Cell membrane</keyword>
<keyword id="KW-0472">Membrane</keyword>
<keyword id="KW-0547">Nucleotide-binding</keyword>
<keyword id="KW-1278">Translocase</keyword>
<keyword id="KW-0813">Transport</keyword>
<dbReference type="EC" id="7.6.2.14" evidence="1"/>
<dbReference type="EMBL" id="CP000378">
    <property type="protein sequence ID" value="ABF75991.1"/>
    <property type="molecule type" value="Genomic_DNA"/>
</dbReference>
<dbReference type="SMR" id="Q1BWL4"/>
<dbReference type="HOGENOM" id="CLU_000604_1_22_4"/>
<dbReference type="GO" id="GO:0005886">
    <property type="term" value="C:plasma membrane"/>
    <property type="evidence" value="ECO:0007669"/>
    <property type="project" value="UniProtKB-SubCell"/>
</dbReference>
<dbReference type="GO" id="GO:0005524">
    <property type="term" value="F:ATP binding"/>
    <property type="evidence" value="ECO:0007669"/>
    <property type="project" value="UniProtKB-KW"/>
</dbReference>
<dbReference type="GO" id="GO:0016887">
    <property type="term" value="F:ATP hydrolysis activity"/>
    <property type="evidence" value="ECO:0007669"/>
    <property type="project" value="InterPro"/>
</dbReference>
<dbReference type="CDD" id="cd03293">
    <property type="entry name" value="ABC_NrtD_SsuB_transporters"/>
    <property type="match status" value="1"/>
</dbReference>
<dbReference type="Gene3D" id="3.40.50.300">
    <property type="entry name" value="P-loop containing nucleotide triphosphate hydrolases"/>
    <property type="match status" value="1"/>
</dbReference>
<dbReference type="InterPro" id="IPR003593">
    <property type="entry name" value="AAA+_ATPase"/>
</dbReference>
<dbReference type="InterPro" id="IPR003439">
    <property type="entry name" value="ABC_transporter-like_ATP-bd"/>
</dbReference>
<dbReference type="InterPro" id="IPR017871">
    <property type="entry name" value="ABC_transporter-like_CS"/>
</dbReference>
<dbReference type="InterPro" id="IPR050166">
    <property type="entry name" value="ABC_transporter_ATP-bind"/>
</dbReference>
<dbReference type="InterPro" id="IPR027417">
    <property type="entry name" value="P-loop_NTPase"/>
</dbReference>
<dbReference type="PANTHER" id="PTHR42788:SF17">
    <property type="entry name" value="ALIPHATIC SULFONATES IMPORT ATP-BINDING PROTEIN SSUB"/>
    <property type="match status" value="1"/>
</dbReference>
<dbReference type="PANTHER" id="PTHR42788">
    <property type="entry name" value="TAURINE IMPORT ATP-BINDING PROTEIN-RELATED"/>
    <property type="match status" value="1"/>
</dbReference>
<dbReference type="Pfam" id="PF00005">
    <property type="entry name" value="ABC_tran"/>
    <property type="match status" value="1"/>
</dbReference>
<dbReference type="SMART" id="SM00382">
    <property type="entry name" value="AAA"/>
    <property type="match status" value="1"/>
</dbReference>
<dbReference type="SUPFAM" id="SSF52540">
    <property type="entry name" value="P-loop containing nucleoside triphosphate hydrolases"/>
    <property type="match status" value="1"/>
</dbReference>
<dbReference type="PROSITE" id="PS00211">
    <property type="entry name" value="ABC_TRANSPORTER_1"/>
    <property type="match status" value="1"/>
</dbReference>
<dbReference type="PROSITE" id="PS50893">
    <property type="entry name" value="ABC_TRANSPORTER_2"/>
    <property type="match status" value="1"/>
</dbReference>
<dbReference type="PROSITE" id="PS51291">
    <property type="entry name" value="SSUB"/>
    <property type="match status" value="1"/>
</dbReference>
<protein>
    <recommendedName>
        <fullName evidence="1">Aliphatic sulfonates import ATP-binding protein SsuB 1</fullName>
        <ecNumber evidence="1">7.6.2.14</ecNumber>
    </recommendedName>
</protein>
<proteinExistence type="inferred from homology"/>
<comment type="function">
    <text evidence="1">Part of the ABC transporter complex SsuABC involved in aliphatic sulfonates import. Responsible for energy coupling to the transport system.</text>
</comment>
<comment type="catalytic activity">
    <reaction evidence="1">
        <text>ATP + H2O + aliphatic sulfonate-[sulfonate-binding protein]Side 1 = ADP + phosphate + aliphatic sulfonateSide 2 + [sulfonate-binding protein]Side 1.</text>
        <dbReference type="EC" id="7.6.2.14"/>
    </reaction>
</comment>
<comment type="subunit">
    <text evidence="1">The complex is composed of two ATP-binding proteins (SsuB), two transmembrane proteins (SsuC) and a solute-binding protein (SsuA).</text>
</comment>
<comment type="subcellular location">
    <subcellularLocation>
        <location evidence="1">Cell inner membrane</location>
        <topology evidence="1">Peripheral membrane protein</topology>
    </subcellularLocation>
</comment>
<comment type="similarity">
    <text evidence="1">Belongs to the ABC transporter superfamily. Aliphatic sulfonates importer (TC 3.A.1.17.2) family.</text>
</comment>
<accession>Q1BWL4</accession>
<gene>
    <name evidence="1" type="primary">ssuB1</name>
    <name type="ordered locus">Bcen_1084</name>
</gene>
<feature type="chain" id="PRO_0000279895" description="Aliphatic sulfonates import ATP-binding protein SsuB 1">
    <location>
        <begin position="1"/>
        <end position="319"/>
    </location>
</feature>
<feature type="domain" description="ABC transporter" evidence="1">
    <location>
        <begin position="63"/>
        <end position="282"/>
    </location>
</feature>
<feature type="binding site" evidence="1">
    <location>
        <begin position="95"/>
        <end position="102"/>
    </location>
    <ligand>
        <name>ATP</name>
        <dbReference type="ChEBI" id="CHEBI:30616"/>
    </ligand>
</feature>
<evidence type="ECO:0000255" key="1">
    <source>
        <dbReference type="HAMAP-Rule" id="MF_01724"/>
    </source>
</evidence>